<reference key="1">
    <citation type="journal article" date="2011" name="J. Bacteriol.">
        <title>Complete genome sequence of the Thermophilic Bacterium Exiguobacterium sp. AT1b.</title>
        <authorList>
            <person name="Vishnivetskaya T.A."/>
            <person name="Lucas S."/>
            <person name="Copeland A."/>
            <person name="Lapidus A."/>
            <person name="Glavina del Rio T."/>
            <person name="Dalin E."/>
            <person name="Tice H."/>
            <person name="Bruce D.C."/>
            <person name="Goodwin L.A."/>
            <person name="Pitluck S."/>
            <person name="Saunders E."/>
            <person name="Brettin T."/>
            <person name="Detter C."/>
            <person name="Han C."/>
            <person name="Larimer F."/>
            <person name="Land M.L."/>
            <person name="Hauser L.J."/>
            <person name="Kyrpides N.C."/>
            <person name="Ovchinnikova G."/>
            <person name="Kathariou S."/>
            <person name="Ramaley R.F."/>
            <person name="Rodrigues D.F."/>
            <person name="Hendrix C."/>
            <person name="Richardson P."/>
            <person name="Tiedje J.M."/>
        </authorList>
    </citation>
    <scope>NUCLEOTIDE SEQUENCE [LARGE SCALE GENOMIC DNA]</scope>
    <source>
        <strain>ATCC BAA-1283 / AT1b</strain>
    </source>
</reference>
<dbReference type="EC" id="2.3.1.274" evidence="1"/>
<dbReference type="EMBL" id="CP001615">
    <property type="protein sequence ID" value="ACQ71797.1"/>
    <property type="molecule type" value="Genomic_DNA"/>
</dbReference>
<dbReference type="RefSeq" id="WP_015881356.1">
    <property type="nucleotide sequence ID" value="NC_012673.1"/>
</dbReference>
<dbReference type="SMR" id="C4L5Z1"/>
<dbReference type="STRING" id="360911.EAT1b_2883"/>
<dbReference type="KEGG" id="eat:EAT1b_2883"/>
<dbReference type="eggNOG" id="COG0416">
    <property type="taxonomic scope" value="Bacteria"/>
</dbReference>
<dbReference type="HOGENOM" id="CLU_039379_1_1_9"/>
<dbReference type="OrthoDB" id="9806408at2"/>
<dbReference type="UniPathway" id="UPA00085"/>
<dbReference type="Proteomes" id="UP000000716">
    <property type="component" value="Chromosome"/>
</dbReference>
<dbReference type="GO" id="GO:0005737">
    <property type="term" value="C:cytoplasm"/>
    <property type="evidence" value="ECO:0007669"/>
    <property type="project" value="UniProtKB-SubCell"/>
</dbReference>
<dbReference type="GO" id="GO:0043811">
    <property type="term" value="F:phosphate:acyl-[acyl carrier protein] acyltransferase activity"/>
    <property type="evidence" value="ECO:0007669"/>
    <property type="project" value="UniProtKB-UniRule"/>
</dbReference>
<dbReference type="GO" id="GO:0006633">
    <property type="term" value="P:fatty acid biosynthetic process"/>
    <property type="evidence" value="ECO:0007669"/>
    <property type="project" value="UniProtKB-UniRule"/>
</dbReference>
<dbReference type="GO" id="GO:0008654">
    <property type="term" value="P:phospholipid biosynthetic process"/>
    <property type="evidence" value="ECO:0007669"/>
    <property type="project" value="UniProtKB-KW"/>
</dbReference>
<dbReference type="Gene3D" id="3.40.718.10">
    <property type="entry name" value="Isopropylmalate Dehydrogenase"/>
    <property type="match status" value="1"/>
</dbReference>
<dbReference type="HAMAP" id="MF_00019">
    <property type="entry name" value="PlsX"/>
    <property type="match status" value="1"/>
</dbReference>
<dbReference type="InterPro" id="IPR003664">
    <property type="entry name" value="FA_synthesis"/>
</dbReference>
<dbReference type="InterPro" id="IPR012281">
    <property type="entry name" value="Phospholipid_synth_PlsX-like"/>
</dbReference>
<dbReference type="NCBIfam" id="TIGR00182">
    <property type="entry name" value="plsX"/>
    <property type="match status" value="1"/>
</dbReference>
<dbReference type="PANTHER" id="PTHR30100">
    <property type="entry name" value="FATTY ACID/PHOSPHOLIPID SYNTHESIS PROTEIN PLSX"/>
    <property type="match status" value="1"/>
</dbReference>
<dbReference type="PANTHER" id="PTHR30100:SF1">
    <property type="entry name" value="PHOSPHATE ACYLTRANSFERASE"/>
    <property type="match status" value="1"/>
</dbReference>
<dbReference type="Pfam" id="PF02504">
    <property type="entry name" value="FA_synthesis"/>
    <property type="match status" value="1"/>
</dbReference>
<dbReference type="PIRSF" id="PIRSF002465">
    <property type="entry name" value="Phsphlp_syn_PlsX"/>
    <property type="match status" value="1"/>
</dbReference>
<dbReference type="SUPFAM" id="SSF53659">
    <property type="entry name" value="Isocitrate/Isopropylmalate dehydrogenase-like"/>
    <property type="match status" value="1"/>
</dbReference>
<proteinExistence type="inferred from homology"/>
<keyword id="KW-0963">Cytoplasm</keyword>
<keyword id="KW-0444">Lipid biosynthesis</keyword>
<keyword id="KW-0443">Lipid metabolism</keyword>
<keyword id="KW-0594">Phospholipid biosynthesis</keyword>
<keyword id="KW-1208">Phospholipid metabolism</keyword>
<keyword id="KW-0808">Transferase</keyword>
<organism>
    <name type="scientific">Exiguobacterium sp. (strain ATCC BAA-1283 / AT1b)</name>
    <dbReference type="NCBI Taxonomy" id="360911"/>
    <lineage>
        <taxon>Bacteria</taxon>
        <taxon>Bacillati</taxon>
        <taxon>Bacillota</taxon>
        <taxon>Bacilli</taxon>
        <taxon>Bacillales</taxon>
        <taxon>Bacillales Family XII. Incertae Sedis</taxon>
        <taxon>Exiguobacterium</taxon>
    </lineage>
</organism>
<accession>C4L5Z1</accession>
<gene>
    <name evidence="1" type="primary">plsX</name>
    <name type="ordered locus">EAT1b_2883</name>
</gene>
<protein>
    <recommendedName>
        <fullName evidence="1">Phosphate acyltransferase</fullName>
        <ecNumber evidence="1">2.3.1.274</ecNumber>
    </recommendedName>
    <alternativeName>
        <fullName evidence="1">Acyl-ACP phosphotransacylase</fullName>
    </alternativeName>
    <alternativeName>
        <fullName evidence="1">Acyl-[acyl-carrier-protein]--phosphate acyltransferase</fullName>
    </alternativeName>
    <alternativeName>
        <fullName evidence="1">Phosphate-acyl-ACP acyltransferase</fullName>
    </alternativeName>
</protein>
<feature type="chain" id="PRO_1000201890" description="Phosphate acyltransferase">
    <location>
        <begin position="1"/>
        <end position="329"/>
    </location>
</feature>
<name>PLSX_EXISA</name>
<evidence type="ECO:0000255" key="1">
    <source>
        <dbReference type="HAMAP-Rule" id="MF_00019"/>
    </source>
</evidence>
<comment type="function">
    <text evidence="1">Catalyzes the reversible formation of acyl-phosphate (acyl-PO(4)) from acyl-[acyl-carrier-protein] (acyl-ACP). This enzyme utilizes acyl-ACP as fatty acyl donor, but not acyl-CoA.</text>
</comment>
<comment type="catalytic activity">
    <reaction evidence="1">
        <text>a fatty acyl-[ACP] + phosphate = an acyl phosphate + holo-[ACP]</text>
        <dbReference type="Rhea" id="RHEA:42292"/>
        <dbReference type="Rhea" id="RHEA-COMP:9685"/>
        <dbReference type="Rhea" id="RHEA-COMP:14125"/>
        <dbReference type="ChEBI" id="CHEBI:43474"/>
        <dbReference type="ChEBI" id="CHEBI:59918"/>
        <dbReference type="ChEBI" id="CHEBI:64479"/>
        <dbReference type="ChEBI" id="CHEBI:138651"/>
        <dbReference type="EC" id="2.3.1.274"/>
    </reaction>
</comment>
<comment type="pathway">
    <text evidence="1">Lipid metabolism; phospholipid metabolism.</text>
</comment>
<comment type="subunit">
    <text evidence="1">Homodimer. Probably interacts with PlsY.</text>
</comment>
<comment type="subcellular location">
    <subcellularLocation>
        <location evidence="1">Cytoplasm</location>
    </subcellularLocation>
    <text evidence="1">Associated with the membrane possibly through PlsY.</text>
</comment>
<comment type="similarity">
    <text evidence="1">Belongs to the PlsX family.</text>
</comment>
<sequence length="329" mass="34934">MKLAIDAMGGDHAPKAIVEGVKRFVAQYPNESMELFLVGDEVKIASYGLDDPRVTVVPASEIITGEDEPVRAVRRKKDSSLVVAAQLVKEGKADALVSAGNTGALMAASLFIIGRIPGIERPALSPTFPTYTGSGVVVLDVGANPDAKAEHLVDYAIMGSLYAEHVRGIKTPRVALLNIGTEAGKGNALTKEAFPLLEQAPVHFVGNVEAREAMSGDVDVIVTEGFAGNILLKGVEGSSSMLMKMMKEQFTSDLVSKLAALILKPKLRRLKETLDYREHGGAGLFGINAPVIKAHGSSDALAIMSALKQAKIMVDHDVVEKIKRAKAID</sequence>